<comment type="similarity">
    <text evidence="1">Belongs to the UPF0227 family.</text>
</comment>
<name>Y1906_YERPA</name>
<evidence type="ECO:0000255" key="1">
    <source>
        <dbReference type="HAMAP-Rule" id="MF_01047"/>
    </source>
</evidence>
<proteinExistence type="inferred from homology"/>
<sequence>MIVYLHGFDSNSPGNHEKVLQLQFIDPDVRFISYSTLHPRHDMQYLLKEVDKAIQQGGDEKSLICGVGLGGFWAERIGFLCGIRQVAFNPNLYPQENMSGKIDRPEEYIDIASKCIDGFREKNRDRCLVVLSRHDEMLDSQRTAGDLHPYYEIVWDDKQNHKFKDLSPHLQRIKAFKTLG</sequence>
<feature type="chain" id="PRO_1000064306" description="UPF0227 protein YPA_1906">
    <location>
        <begin position="1"/>
        <end position="180"/>
    </location>
</feature>
<gene>
    <name type="ordered locus">YPA_1906</name>
</gene>
<dbReference type="EMBL" id="CP000308">
    <property type="protein sequence ID" value="ABG13872.1"/>
    <property type="molecule type" value="Genomic_DNA"/>
</dbReference>
<dbReference type="SMR" id="Q1C6Q0"/>
<dbReference type="ESTHER" id="yerpe-y1616">
    <property type="family name" value="abh_upf00227"/>
</dbReference>
<dbReference type="KEGG" id="ypa:YPA_1906"/>
<dbReference type="Proteomes" id="UP000001971">
    <property type="component" value="Chromosome"/>
</dbReference>
<dbReference type="Gene3D" id="3.40.50.1820">
    <property type="entry name" value="alpha/beta hydrolase"/>
    <property type="match status" value="1"/>
</dbReference>
<dbReference type="HAMAP" id="MF_01047">
    <property type="entry name" value="UPF0227"/>
    <property type="match status" value="1"/>
</dbReference>
<dbReference type="InterPro" id="IPR029058">
    <property type="entry name" value="AB_hydrolase_fold"/>
</dbReference>
<dbReference type="InterPro" id="IPR022987">
    <property type="entry name" value="UPF0227"/>
</dbReference>
<dbReference type="InterPro" id="IPR008886">
    <property type="entry name" value="UPF0227/Esterase_YqiA"/>
</dbReference>
<dbReference type="NCBIfam" id="NF003431">
    <property type="entry name" value="PRK04940.1"/>
    <property type="match status" value="1"/>
</dbReference>
<dbReference type="PANTHER" id="PTHR35602">
    <property type="entry name" value="ESTERASE YQIA-RELATED"/>
    <property type="match status" value="1"/>
</dbReference>
<dbReference type="PANTHER" id="PTHR35602:SF2">
    <property type="entry name" value="UPF0227 PROTEIN YCFP"/>
    <property type="match status" value="1"/>
</dbReference>
<dbReference type="Pfam" id="PF05728">
    <property type="entry name" value="UPF0227"/>
    <property type="match status" value="1"/>
</dbReference>
<dbReference type="SUPFAM" id="SSF53474">
    <property type="entry name" value="alpha/beta-Hydrolases"/>
    <property type="match status" value="1"/>
</dbReference>
<reference key="1">
    <citation type="journal article" date="2006" name="J. Bacteriol.">
        <title>Complete genome sequence of Yersinia pestis strains Antiqua and Nepal516: evidence of gene reduction in an emerging pathogen.</title>
        <authorList>
            <person name="Chain P.S.G."/>
            <person name="Hu P."/>
            <person name="Malfatti S.A."/>
            <person name="Radnedge L."/>
            <person name="Larimer F."/>
            <person name="Vergez L.M."/>
            <person name="Worsham P."/>
            <person name="Chu M.C."/>
            <person name="Andersen G.L."/>
        </authorList>
    </citation>
    <scope>NUCLEOTIDE SEQUENCE [LARGE SCALE GENOMIC DNA]</scope>
    <source>
        <strain>Antiqua</strain>
    </source>
</reference>
<protein>
    <recommendedName>
        <fullName evidence="1">UPF0227 protein YPA_1906</fullName>
    </recommendedName>
</protein>
<accession>Q1C6Q0</accession>
<organism>
    <name type="scientific">Yersinia pestis bv. Antiqua (strain Antiqua)</name>
    <dbReference type="NCBI Taxonomy" id="360102"/>
    <lineage>
        <taxon>Bacteria</taxon>
        <taxon>Pseudomonadati</taxon>
        <taxon>Pseudomonadota</taxon>
        <taxon>Gammaproteobacteria</taxon>
        <taxon>Enterobacterales</taxon>
        <taxon>Yersiniaceae</taxon>
        <taxon>Yersinia</taxon>
    </lineage>
</organism>